<comment type="catalytic activity">
    <reaction>
        <text>L-glutamate + NADP(+) + H2O = 2-oxoglutarate + NH4(+) + NADPH + H(+)</text>
        <dbReference type="Rhea" id="RHEA:11612"/>
        <dbReference type="ChEBI" id="CHEBI:15377"/>
        <dbReference type="ChEBI" id="CHEBI:15378"/>
        <dbReference type="ChEBI" id="CHEBI:16810"/>
        <dbReference type="ChEBI" id="CHEBI:28938"/>
        <dbReference type="ChEBI" id="CHEBI:29985"/>
        <dbReference type="ChEBI" id="CHEBI:57783"/>
        <dbReference type="ChEBI" id="CHEBI:58349"/>
        <dbReference type="EC" id="1.4.1.4"/>
    </reaction>
</comment>
<comment type="subunit">
    <text evidence="1">Homohexamer.</text>
</comment>
<comment type="similarity">
    <text evidence="3">Belongs to the Glu/Leu/Phe/Val dehydrogenases family.</text>
</comment>
<gene>
    <name type="primary">GDH2</name>
</gene>
<evidence type="ECO:0000250" key="1"/>
<evidence type="ECO:0000255" key="2">
    <source>
        <dbReference type="PROSITE-ProRule" id="PRU10011"/>
    </source>
</evidence>
<evidence type="ECO:0000305" key="3"/>
<proteinExistence type="inferred from homology"/>
<name>DHE4_FUSFU</name>
<dbReference type="EC" id="1.4.1.4"/>
<dbReference type="EMBL" id="AJ315471">
    <property type="protein sequence ID" value="CAC45043.1"/>
    <property type="molecule type" value="Genomic_DNA"/>
</dbReference>
<dbReference type="SMR" id="Q96VJ7"/>
<dbReference type="eggNOG" id="KOG2250">
    <property type="taxonomic scope" value="Eukaryota"/>
</dbReference>
<dbReference type="GO" id="GO:0005829">
    <property type="term" value="C:cytosol"/>
    <property type="evidence" value="ECO:0007669"/>
    <property type="project" value="TreeGrafter"/>
</dbReference>
<dbReference type="GO" id="GO:0004354">
    <property type="term" value="F:glutamate dehydrogenase (NADP+) activity"/>
    <property type="evidence" value="ECO:0007669"/>
    <property type="project" value="UniProtKB-EC"/>
</dbReference>
<dbReference type="GO" id="GO:0006537">
    <property type="term" value="P:glutamate biosynthetic process"/>
    <property type="evidence" value="ECO:0007669"/>
    <property type="project" value="TreeGrafter"/>
</dbReference>
<dbReference type="CDD" id="cd05313">
    <property type="entry name" value="NAD_bind_2_Glu_DH"/>
    <property type="match status" value="1"/>
</dbReference>
<dbReference type="FunFam" id="1.10.285.10:FF:000001">
    <property type="entry name" value="Glutamate dehydrogenase"/>
    <property type="match status" value="1"/>
</dbReference>
<dbReference type="FunFam" id="1.10.285.10:FF:000003">
    <property type="entry name" value="Glutamate dehydrogenase"/>
    <property type="match status" value="1"/>
</dbReference>
<dbReference type="FunFam" id="3.40.50.10860:FF:000002">
    <property type="entry name" value="Glutamate dehydrogenase"/>
    <property type="match status" value="1"/>
</dbReference>
<dbReference type="FunFam" id="3.40.50.720:FF:000030">
    <property type="entry name" value="Glutamate dehydrogenase"/>
    <property type="match status" value="1"/>
</dbReference>
<dbReference type="Gene3D" id="1.10.285.10">
    <property type="entry name" value="Glutamate Dehydrogenase, chain A, domain 3"/>
    <property type="match status" value="2"/>
</dbReference>
<dbReference type="Gene3D" id="3.40.50.10860">
    <property type="entry name" value="Leucine Dehydrogenase, chain A, domain 1"/>
    <property type="match status" value="1"/>
</dbReference>
<dbReference type="Gene3D" id="3.40.50.720">
    <property type="entry name" value="NAD(P)-binding Rossmann-like Domain"/>
    <property type="match status" value="1"/>
</dbReference>
<dbReference type="InterPro" id="IPR046346">
    <property type="entry name" value="Aminoacid_DH-like_N_sf"/>
</dbReference>
<dbReference type="InterPro" id="IPR006095">
    <property type="entry name" value="Glu/Leu/Phe/Val/Trp_DH"/>
</dbReference>
<dbReference type="InterPro" id="IPR006096">
    <property type="entry name" value="Glu/Leu/Phe/Val/Trp_DH_C"/>
</dbReference>
<dbReference type="InterPro" id="IPR006097">
    <property type="entry name" value="Glu/Leu/Phe/Val/Trp_DH_dimer"/>
</dbReference>
<dbReference type="InterPro" id="IPR033524">
    <property type="entry name" value="Glu/Leu/Phe/Val_DH_AS"/>
</dbReference>
<dbReference type="InterPro" id="IPR014362">
    <property type="entry name" value="Glu_DH"/>
</dbReference>
<dbReference type="InterPro" id="IPR050724">
    <property type="entry name" value="Glu_Leu_Phe_Val_DH"/>
</dbReference>
<dbReference type="InterPro" id="IPR036291">
    <property type="entry name" value="NAD(P)-bd_dom_sf"/>
</dbReference>
<dbReference type="InterPro" id="IPR033922">
    <property type="entry name" value="NAD_bind_Glu_DH"/>
</dbReference>
<dbReference type="NCBIfam" id="NF006929">
    <property type="entry name" value="PRK09414.1"/>
    <property type="match status" value="1"/>
</dbReference>
<dbReference type="PANTHER" id="PTHR43571">
    <property type="entry name" value="NADP-SPECIFIC GLUTAMATE DEHYDROGENASE 1-RELATED"/>
    <property type="match status" value="1"/>
</dbReference>
<dbReference type="PANTHER" id="PTHR43571:SF1">
    <property type="entry name" value="NADP-SPECIFIC GLUTAMATE DEHYDROGENASE 1-RELATED"/>
    <property type="match status" value="1"/>
</dbReference>
<dbReference type="Pfam" id="PF00208">
    <property type="entry name" value="ELFV_dehydrog"/>
    <property type="match status" value="1"/>
</dbReference>
<dbReference type="Pfam" id="PF02812">
    <property type="entry name" value="ELFV_dehydrog_N"/>
    <property type="match status" value="1"/>
</dbReference>
<dbReference type="PIRSF" id="PIRSF000185">
    <property type="entry name" value="Glu_DH"/>
    <property type="match status" value="1"/>
</dbReference>
<dbReference type="PRINTS" id="PR00082">
    <property type="entry name" value="GLFDHDRGNASE"/>
</dbReference>
<dbReference type="SMART" id="SM00839">
    <property type="entry name" value="ELFV_dehydrog"/>
    <property type="match status" value="1"/>
</dbReference>
<dbReference type="SUPFAM" id="SSF53223">
    <property type="entry name" value="Aminoacid dehydrogenase-like, N-terminal domain"/>
    <property type="match status" value="1"/>
</dbReference>
<dbReference type="SUPFAM" id="SSF51735">
    <property type="entry name" value="NAD(P)-binding Rossmann-fold domains"/>
    <property type="match status" value="1"/>
</dbReference>
<dbReference type="PROSITE" id="PS00074">
    <property type="entry name" value="GLFV_DEHYDROGENASE"/>
    <property type="match status" value="1"/>
</dbReference>
<feature type="chain" id="PRO_0000182787" description="NADP-specific glutamate dehydrogenase">
    <location>
        <begin position="1"/>
        <end position="451"/>
    </location>
</feature>
<feature type="active site" evidence="2">
    <location>
        <position position="114"/>
    </location>
</feature>
<reference key="1">
    <citation type="submission" date="2001-07" db="EMBL/GenBank/DDBJ databases">
        <title>Cloning and characterization of the NADP-depending glutamate dehydrogenase gene from Gibberella fujikuroi.</title>
        <authorList>
            <person name="Tudzynski B."/>
        </authorList>
    </citation>
    <scope>NUCLEOTIDE SEQUENCE [GENOMIC DNA]</scope>
    <source>
        <strain>m567</strain>
    </source>
</reference>
<sequence length="451" mass="48826">MSHLPQEPEFEQAYGELASALENSSLFNEHPEYRTALAVAAIPERVIQFRVVWNDDKGNLQVNRGYRVQFNGALGPYKGGLRFHPSVNLSILKFLGFEQIFKNALTGLNMGGGKGGADFDPKGKSDAEIRRFCQAFMTELSKHIGAETDVPAGDIGVGGREIGYLFGAYRKFANRWEGVLTGKGLSWGGSLIRPEATGYGLVYYVEYMLKHANRGTFEGKRVALSGSGNVAQYAALKIIELGGSVVSLSDSKGALVAKEGSSFTPEQIHNIAALKIKHQALTTFEHDGQFTWIEGARPWVHVGKVDIALPSATQNEVSKEEAQALVDAGAFIVAEGSNMGCTAEAIDVFEAHRKEKGAEALWYAPGKASNCGGVAVSGLEMAQNSQRIQWTEKEVDDRLKAIMKDAFVAGLETAQKYVEAKEGELPSLIAGSNIAGFIKVAEAMHDQGDWF</sequence>
<keyword id="KW-0521">NADP</keyword>
<keyword id="KW-0560">Oxidoreductase</keyword>
<protein>
    <recommendedName>
        <fullName>NADP-specific glutamate dehydrogenase</fullName>
        <shortName>NADP-GDH</shortName>
        <ecNumber>1.4.1.4</ecNumber>
    </recommendedName>
    <alternativeName>
        <fullName>NADP-dependent glutamate dehydrogenase</fullName>
    </alternativeName>
</protein>
<accession>Q96VJ7</accession>
<organism>
    <name type="scientific">Fusarium fujikuroi</name>
    <name type="common">Bakanae and foot rot disease fungus</name>
    <name type="synonym">Gibberella fujikuroi</name>
    <dbReference type="NCBI Taxonomy" id="5127"/>
    <lineage>
        <taxon>Eukaryota</taxon>
        <taxon>Fungi</taxon>
        <taxon>Dikarya</taxon>
        <taxon>Ascomycota</taxon>
        <taxon>Pezizomycotina</taxon>
        <taxon>Sordariomycetes</taxon>
        <taxon>Hypocreomycetidae</taxon>
        <taxon>Hypocreales</taxon>
        <taxon>Nectriaceae</taxon>
        <taxon>Fusarium</taxon>
        <taxon>Fusarium fujikuroi species complex</taxon>
    </lineage>
</organism>